<reference key="1">
    <citation type="journal article" date="2004" name="FEMS Microbiol. Lett.">
        <title>Mitochondrial DNA organisation of the mtDNA type 2b of Aspergillus tubingensis compared to the Aspergillus niger mtDNA type 1a.</title>
        <authorList>
            <person name="Juhasz A."/>
            <person name="Laday M."/>
            <person name="Gacser A."/>
            <person name="Kucsera J."/>
            <person name="Pfeiffer I."/>
            <person name="Kevei F."/>
            <person name="Hamari Z."/>
        </authorList>
    </citation>
    <scope>NUCLEOTIDE SEQUENCE [GENOMIC DNA]</scope>
    <source>
        <strain>N909</strain>
    </source>
</reference>
<comment type="function">
    <text evidence="1">Core subunit of the mitochondrial membrane respiratory chain NADH dehydrogenase (Complex I) that is believed to belong to the minimal assembly required for catalysis. Complex I functions in the transfer of electrons from NADH to the respiratory chain. The immediate electron acceptor for the enzyme is believed to be ubiquinone (By similarity).</text>
</comment>
<comment type="catalytic activity">
    <reaction>
        <text>a ubiquinone + NADH + 5 H(+)(in) = a ubiquinol + NAD(+) + 4 H(+)(out)</text>
        <dbReference type="Rhea" id="RHEA:29091"/>
        <dbReference type="Rhea" id="RHEA-COMP:9565"/>
        <dbReference type="Rhea" id="RHEA-COMP:9566"/>
        <dbReference type="ChEBI" id="CHEBI:15378"/>
        <dbReference type="ChEBI" id="CHEBI:16389"/>
        <dbReference type="ChEBI" id="CHEBI:17976"/>
        <dbReference type="ChEBI" id="CHEBI:57540"/>
        <dbReference type="ChEBI" id="CHEBI:57945"/>
        <dbReference type="EC" id="7.1.1.2"/>
    </reaction>
</comment>
<comment type="subcellular location">
    <subcellularLocation>
        <location evidence="1">Mitochondrion inner membrane</location>
        <topology evidence="1">Multi-pass membrane protein</topology>
    </subcellularLocation>
</comment>
<comment type="similarity">
    <text evidence="3">Belongs to the complex I subunit 5 family.</text>
</comment>
<proteinExistence type="inferred from homology"/>
<protein>
    <recommendedName>
        <fullName>NADH-ubiquinone oxidoreductase chain 5</fullName>
        <ecNumber>7.1.1.2</ecNumber>
    </recommendedName>
</protein>
<name>NU5M_ASPNG</name>
<feature type="chain" id="PRO_0000118064" description="NADH-ubiquinone oxidoreductase chain 5">
    <location>
        <begin position="1"/>
        <end position="656"/>
    </location>
</feature>
<feature type="transmembrane region" description="Helical" evidence="2">
    <location>
        <begin position="4"/>
        <end position="21"/>
    </location>
</feature>
<feature type="transmembrane region" description="Helical" evidence="2">
    <location>
        <begin position="28"/>
        <end position="50"/>
    </location>
</feature>
<feature type="transmembrane region" description="Helical" evidence="2">
    <location>
        <begin position="81"/>
        <end position="103"/>
    </location>
</feature>
<feature type="transmembrane region" description="Helical" evidence="2">
    <location>
        <begin position="112"/>
        <end position="129"/>
    </location>
</feature>
<feature type="transmembrane region" description="Helical" evidence="2">
    <location>
        <begin position="133"/>
        <end position="155"/>
    </location>
</feature>
<feature type="transmembrane region" description="Helical" evidence="2">
    <location>
        <begin position="176"/>
        <end position="198"/>
    </location>
</feature>
<feature type="transmembrane region" description="Helical" evidence="2">
    <location>
        <begin position="208"/>
        <end position="230"/>
    </location>
</feature>
<feature type="transmembrane region" description="Helical" evidence="2">
    <location>
        <begin position="243"/>
        <end position="262"/>
    </location>
</feature>
<feature type="transmembrane region" description="Helical" evidence="2">
    <location>
        <begin position="272"/>
        <end position="294"/>
    </location>
</feature>
<feature type="transmembrane region" description="Helical" evidence="2">
    <location>
        <begin position="301"/>
        <end position="319"/>
    </location>
</feature>
<feature type="transmembrane region" description="Helical" evidence="2">
    <location>
        <begin position="329"/>
        <end position="351"/>
    </location>
</feature>
<feature type="transmembrane region" description="Helical" evidence="2">
    <location>
        <begin position="364"/>
        <end position="386"/>
    </location>
</feature>
<feature type="transmembrane region" description="Helical" evidence="2">
    <location>
        <begin position="409"/>
        <end position="431"/>
    </location>
</feature>
<feature type="transmembrane region" description="Helical" evidence="2">
    <location>
        <begin position="452"/>
        <end position="471"/>
    </location>
</feature>
<feature type="transmembrane region" description="Helical" evidence="2">
    <location>
        <begin position="514"/>
        <end position="536"/>
    </location>
</feature>
<feature type="transmembrane region" description="Helical" evidence="2">
    <location>
        <begin position="603"/>
        <end position="625"/>
    </location>
</feature>
<feature type="transmembrane region" description="Helical" evidence="2">
    <location>
        <begin position="629"/>
        <end position="651"/>
    </location>
</feature>
<sequence length="656" mass="73072">MYLTLIILPLLGSIVSGFFGRKVGVKGAHLITCVSVITTTFLAILAFFEVGFNNIPVTINVARWVDVESLYVLWNFRFDSLTVSMFITVLIVSSLVHIYSISYMSHDPHNQRFFSYLSLFTFMMIILVTGNNYLIMFVGWEGVGVCSYLLVNFWFTRIAANQSSLSALLTNREGDTLLTVGMFAILWSFGNIDYSTVFALAPYYNENIITIIGICLLIGATAKSSQVGLHIWLPQAMEGPTPVSALIHAATMVTAGVYLLMRSSPLIEYSSTVLVLCLWLGAITTVFSSLIGLFQQDIKKVIAYSTMSQLGMMVIAVGLSSYNLALFHLVNHAFYKALLFLGAGSVIHAVADNQDFRKYGGLREFLPLTYSVMLIASLSLVAVPFMTGFYSKDFILESAYGQYYLSSTIVYFVATIGAMFTTLYSAKVLYLTFLTNPNGPLVNYKHAHEGDLFMTIPLIILAIFSIFFGYLTKDIFIGLGTGFFTDNSLFIHPSHEIMLDTEFAVPTFFKLLPFVFTVSLSLLSVLLSEFLPKLLINFKFSRLGYNIFSFFNQRFYIELFYNKYIVEGVLKLGGQTSKNLNKGPVKLLGPYGLEKGGLALSNSLGNLSTGIVTTYALYILIGLIFDISLLYFSYNDNNLLILIIFTLFALLNSNKK</sequence>
<accession>Q6QU67</accession>
<gene>
    <name type="primary">nad5</name>
</gene>
<evidence type="ECO:0000250" key="1"/>
<evidence type="ECO:0000255" key="2"/>
<evidence type="ECO:0000305" key="3"/>
<organism>
    <name type="scientific">Aspergillus niger</name>
    <dbReference type="NCBI Taxonomy" id="5061"/>
    <lineage>
        <taxon>Eukaryota</taxon>
        <taxon>Fungi</taxon>
        <taxon>Dikarya</taxon>
        <taxon>Ascomycota</taxon>
        <taxon>Pezizomycotina</taxon>
        <taxon>Eurotiomycetes</taxon>
        <taxon>Eurotiomycetidae</taxon>
        <taxon>Eurotiales</taxon>
        <taxon>Aspergillaceae</taxon>
        <taxon>Aspergillus</taxon>
        <taxon>Aspergillus subgen. Circumdati</taxon>
    </lineage>
</organism>
<geneLocation type="mitochondrion"/>
<dbReference type="EC" id="7.1.1.2"/>
<dbReference type="EMBL" id="AY525764">
    <property type="protein sequence ID" value="AAS66787.1"/>
    <property type="molecule type" value="Genomic_DNA"/>
</dbReference>
<dbReference type="RefSeq" id="YP_337890.1">
    <property type="nucleotide sequence ID" value="NC_007445.1"/>
</dbReference>
<dbReference type="SMR" id="Q6QU67"/>
<dbReference type="GeneID" id="3703575"/>
<dbReference type="KEGG" id="ang:Asnifp15"/>
<dbReference type="GO" id="GO:0005743">
    <property type="term" value="C:mitochondrial inner membrane"/>
    <property type="evidence" value="ECO:0007669"/>
    <property type="project" value="UniProtKB-SubCell"/>
</dbReference>
<dbReference type="GO" id="GO:0008137">
    <property type="term" value="F:NADH dehydrogenase (ubiquinone) activity"/>
    <property type="evidence" value="ECO:0007669"/>
    <property type="project" value="UniProtKB-EC"/>
</dbReference>
<dbReference type="GO" id="GO:0042773">
    <property type="term" value="P:ATP synthesis coupled electron transport"/>
    <property type="evidence" value="ECO:0007669"/>
    <property type="project" value="InterPro"/>
</dbReference>
<dbReference type="GO" id="GO:0015990">
    <property type="term" value="P:electron transport coupled proton transport"/>
    <property type="evidence" value="ECO:0007669"/>
    <property type="project" value="TreeGrafter"/>
</dbReference>
<dbReference type="InterPro" id="IPR010934">
    <property type="entry name" value="NADH_DH_su5_C"/>
</dbReference>
<dbReference type="InterPro" id="IPR018393">
    <property type="entry name" value="NADHpl_OxRdtase_5_subgr"/>
</dbReference>
<dbReference type="InterPro" id="IPR001750">
    <property type="entry name" value="ND/Mrp_TM"/>
</dbReference>
<dbReference type="InterPro" id="IPR003945">
    <property type="entry name" value="NU5C-like"/>
</dbReference>
<dbReference type="InterPro" id="IPR001516">
    <property type="entry name" value="Proton_antipo_N"/>
</dbReference>
<dbReference type="NCBIfam" id="TIGR01974">
    <property type="entry name" value="NDH_I_L"/>
    <property type="match status" value="1"/>
</dbReference>
<dbReference type="NCBIfam" id="NF005141">
    <property type="entry name" value="PRK06590.1"/>
    <property type="match status" value="1"/>
</dbReference>
<dbReference type="PANTHER" id="PTHR42829">
    <property type="entry name" value="NADH-UBIQUINONE OXIDOREDUCTASE CHAIN 5"/>
    <property type="match status" value="1"/>
</dbReference>
<dbReference type="PANTHER" id="PTHR42829:SF2">
    <property type="entry name" value="NADH-UBIQUINONE OXIDOREDUCTASE CHAIN 5"/>
    <property type="match status" value="1"/>
</dbReference>
<dbReference type="Pfam" id="PF06455">
    <property type="entry name" value="NADH5_C"/>
    <property type="match status" value="1"/>
</dbReference>
<dbReference type="Pfam" id="PF00361">
    <property type="entry name" value="Proton_antipo_M"/>
    <property type="match status" value="1"/>
</dbReference>
<dbReference type="Pfam" id="PF00662">
    <property type="entry name" value="Proton_antipo_N"/>
    <property type="match status" value="1"/>
</dbReference>
<dbReference type="PRINTS" id="PR01434">
    <property type="entry name" value="NADHDHGNASE5"/>
</dbReference>
<keyword id="KW-0249">Electron transport</keyword>
<keyword id="KW-0472">Membrane</keyword>
<keyword id="KW-0496">Mitochondrion</keyword>
<keyword id="KW-0999">Mitochondrion inner membrane</keyword>
<keyword id="KW-0520">NAD</keyword>
<keyword id="KW-0679">Respiratory chain</keyword>
<keyword id="KW-1278">Translocase</keyword>
<keyword id="KW-0812">Transmembrane</keyword>
<keyword id="KW-1133">Transmembrane helix</keyword>
<keyword id="KW-0813">Transport</keyword>
<keyword id="KW-0830">Ubiquinone</keyword>